<keyword id="KW-0067">ATP-binding</keyword>
<keyword id="KW-0173">Coenzyme A biosynthesis</keyword>
<keyword id="KW-0963">Cytoplasm</keyword>
<keyword id="KW-0460">Magnesium</keyword>
<keyword id="KW-0547">Nucleotide-binding</keyword>
<keyword id="KW-0548">Nucleotidyltransferase</keyword>
<keyword id="KW-0808">Transferase</keyword>
<protein>
    <recommendedName>
        <fullName evidence="1">Phosphopantetheine adenylyltransferase</fullName>
        <ecNumber evidence="1">2.7.7.3</ecNumber>
    </recommendedName>
    <alternativeName>
        <fullName evidence="1">Dephospho-CoA pyrophosphorylase</fullName>
    </alternativeName>
    <alternativeName>
        <fullName evidence="1">Pantetheine-phosphate adenylyltransferase</fullName>
        <shortName evidence="1">PPAT</shortName>
    </alternativeName>
</protein>
<dbReference type="EC" id="2.7.7.3" evidence="1"/>
<dbReference type="EMBL" id="CP001146">
    <property type="protein sequence ID" value="ACI18414.1"/>
    <property type="molecule type" value="Genomic_DNA"/>
</dbReference>
<dbReference type="RefSeq" id="WP_012547046.1">
    <property type="nucleotide sequence ID" value="NC_011297.1"/>
</dbReference>
<dbReference type="SMR" id="B5YEA6"/>
<dbReference type="STRING" id="309799.DICTH_1014"/>
<dbReference type="PaxDb" id="309799-DICTH_1014"/>
<dbReference type="KEGG" id="dth:DICTH_1014"/>
<dbReference type="eggNOG" id="COG0669">
    <property type="taxonomic scope" value="Bacteria"/>
</dbReference>
<dbReference type="HOGENOM" id="CLU_100149_0_1_0"/>
<dbReference type="OrthoDB" id="9806661at2"/>
<dbReference type="UniPathway" id="UPA00241">
    <property type="reaction ID" value="UER00355"/>
</dbReference>
<dbReference type="Proteomes" id="UP000001733">
    <property type="component" value="Chromosome"/>
</dbReference>
<dbReference type="GO" id="GO:0005737">
    <property type="term" value="C:cytoplasm"/>
    <property type="evidence" value="ECO:0007669"/>
    <property type="project" value="UniProtKB-SubCell"/>
</dbReference>
<dbReference type="GO" id="GO:0005524">
    <property type="term" value="F:ATP binding"/>
    <property type="evidence" value="ECO:0007669"/>
    <property type="project" value="UniProtKB-KW"/>
</dbReference>
<dbReference type="GO" id="GO:0004595">
    <property type="term" value="F:pantetheine-phosphate adenylyltransferase activity"/>
    <property type="evidence" value="ECO:0007669"/>
    <property type="project" value="UniProtKB-UniRule"/>
</dbReference>
<dbReference type="GO" id="GO:0015937">
    <property type="term" value="P:coenzyme A biosynthetic process"/>
    <property type="evidence" value="ECO:0007669"/>
    <property type="project" value="UniProtKB-UniRule"/>
</dbReference>
<dbReference type="CDD" id="cd02163">
    <property type="entry name" value="PPAT"/>
    <property type="match status" value="1"/>
</dbReference>
<dbReference type="Gene3D" id="3.40.50.620">
    <property type="entry name" value="HUPs"/>
    <property type="match status" value="1"/>
</dbReference>
<dbReference type="HAMAP" id="MF_00151">
    <property type="entry name" value="PPAT_bact"/>
    <property type="match status" value="1"/>
</dbReference>
<dbReference type="InterPro" id="IPR004821">
    <property type="entry name" value="Cyt_trans-like"/>
</dbReference>
<dbReference type="InterPro" id="IPR001980">
    <property type="entry name" value="PPAT"/>
</dbReference>
<dbReference type="InterPro" id="IPR014729">
    <property type="entry name" value="Rossmann-like_a/b/a_fold"/>
</dbReference>
<dbReference type="NCBIfam" id="TIGR01510">
    <property type="entry name" value="coaD_prev_kdtB"/>
    <property type="match status" value="1"/>
</dbReference>
<dbReference type="NCBIfam" id="TIGR00125">
    <property type="entry name" value="cyt_tran_rel"/>
    <property type="match status" value="1"/>
</dbReference>
<dbReference type="PANTHER" id="PTHR21342">
    <property type="entry name" value="PHOSPHOPANTETHEINE ADENYLYLTRANSFERASE"/>
    <property type="match status" value="1"/>
</dbReference>
<dbReference type="PANTHER" id="PTHR21342:SF1">
    <property type="entry name" value="PHOSPHOPANTETHEINE ADENYLYLTRANSFERASE"/>
    <property type="match status" value="1"/>
</dbReference>
<dbReference type="Pfam" id="PF01467">
    <property type="entry name" value="CTP_transf_like"/>
    <property type="match status" value="1"/>
</dbReference>
<dbReference type="PRINTS" id="PR01020">
    <property type="entry name" value="LPSBIOSNTHSS"/>
</dbReference>
<dbReference type="SUPFAM" id="SSF52374">
    <property type="entry name" value="Nucleotidylyl transferase"/>
    <property type="match status" value="1"/>
</dbReference>
<evidence type="ECO:0000255" key="1">
    <source>
        <dbReference type="HAMAP-Rule" id="MF_00151"/>
    </source>
</evidence>
<sequence length="164" mass="18588">MIKAVYPGSFDPVTNGHIDIIQRGAKIYDEIIVLVAENISKKPLFSLEERLDMLEHSLKDIPNVRIDHFSGLLVDYLRKINVKIIIRGLRAVSDFEYEFQQALTNKKLYPDCETVFLVSDLKYTFLSSSVVKEIASFGGCIKGLVPDYVAEKLYEKFGVKPKGV</sequence>
<accession>B5YEA6</accession>
<proteinExistence type="inferred from homology"/>
<organism>
    <name type="scientific">Dictyoglomus thermophilum (strain ATCC 35947 / DSM 3960 / H-6-12)</name>
    <dbReference type="NCBI Taxonomy" id="309799"/>
    <lineage>
        <taxon>Bacteria</taxon>
        <taxon>Pseudomonadati</taxon>
        <taxon>Dictyoglomota</taxon>
        <taxon>Dictyoglomia</taxon>
        <taxon>Dictyoglomales</taxon>
        <taxon>Dictyoglomaceae</taxon>
        <taxon>Dictyoglomus</taxon>
    </lineage>
</organism>
<comment type="function">
    <text evidence="1">Reversibly transfers an adenylyl group from ATP to 4'-phosphopantetheine, yielding dephospho-CoA (dPCoA) and pyrophosphate.</text>
</comment>
<comment type="catalytic activity">
    <reaction evidence="1">
        <text>(R)-4'-phosphopantetheine + ATP + H(+) = 3'-dephospho-CoA + diphosphate</text>
        <dbReference type="Rhea" id="RHEA:19801"/>
        <dbReference type="ChEBI" id="CHEBI:15378"/>
        <dbReference type="ChEBI" id="CHEBI:30616"/>
        <dbReference type="ChEBI" id="CHEBI:33019"/>
        <dbReference type="ChEBI" id="CHEBI:57328"/>
        <dbReference type="ChEBI" id="CHEBI:61723"/>
        <dbReference type="EC" id="2.7.7.3"/>
    </reaction>
</comment>
<comment type="cofactor">
    <cofactor evidence="1">
        <name>Mg(2+)</name>
        <dbReference type="ChEBI" id="CHEBI:18420"/>
    </cofactor>
</comment>
<comment type="pathway">
    <text evidence="1">Cofactor biosynthesis; coenzyme A biosynthesis; CoA from (R)-pantothenate: step 4/5.</text>
</comment>
<comment type="subunit">
    <text evidence="1">Homohexamer.</text>
</comment>
<comment type="subcellular location">
    <subcellularLocation>
        <location evidence="1">Cytoplasm</location>
    </subcellularLocation>
</comment>
<comment type="similarity">
    <text evidence="1">Belongs to the bacterial CoaD family.</text>
</comment>
<feature type="chain" id="PRO_1000096788" description="Phosphopantetheine adenylyltransferase">
    <location>
        <begin position="1"/>
        <end position="164"/>
    </location>
</feature>
<feature type="binding site" evidence="1">
    <location>
        <begin position="9"/>
        <end position="10"/>
    </location>
    <ligand>
        <name>ATP</name>
        <dbReference type="ChEBI" id="CHEBI:30616"/>
    </ligand>
</feature>
<feature type="binding site" evidence="1">
    <location>
        <position position="9"/>
    </location>
    <ligand>
        <name>substrate</name>
    </ligand>
</feature>
<feature type="binding site" evidence="1">
    <location>
        <position position="17"/>
    </location>
    <ligand>
        <name>ATP</name>
        <dbReference type="ChEBI" id="CHEBI:30616"/>
    </ligand>
</feature>
<feature type="binding site" evidence="1">
    <location>
        <position position="41"/>
    </location>
    <ligand>
        <name>substrate</name>
    </ligand>
</feature>
<feature type="binding site" evidence="1">
    <location>
        <position position="73"/>
    </location>
    <ligand>
        <name>substrate</name>
    </ligand>
</feature>
<feature type="binding site" evidence="1">
    <location>
        <position position="87"/>
    </location>
    <ligand>
        <name>substrate</name>
    </ligand>
</feature>
<feature type="binding site" evidence="1">
    <location>
        <begin position="88"/>
        <end position="90"/>
    </location>
    <ligand>
        <name>ATP</name>
        <dbReference type="ChEBI" id="CHEBI:30616"/>
    </ligand>
</feature>
<feature type="binding site" evidence="1">
    <location>
        <position position="98"/>
    </location>
    <ligand>
        <name>ATP</name>
        <dbReference type="ChEBI" id="CHEBI:30616"/>
    </ligand>
</feature>
<feature type="binding site" evidence="1">
    <location>
        <begin position="123"/>
        <end position="129"/>
    </location>
    <ligand>
        <name>ATP</name>
        <dbReference type="ChEBI" id="CHEBI:30616"/>
    </ligand>
</feature>
<feature type="site" description="Transition state stabilizer" evidence="1">
    <location>
        <position position="17"/>
    </location>
</feature>
<name>COAD_DICT6</name>
<reference key="1">
    <citation type="journal article" date="2014" name="Genome Announc.">
        <title>Complete Genome Sequence of the Extreme Thermophile Dictyoglomus thermophilum H-6-12.</title>
        <authorList>
            <person name="Coil D.A."/>
            <person name="Badger J.H."/>
            <person name="Forberger H.C."/>
            <person name="Riggs F."/>
            <person name="Madupu R."/>
            <person name="Fedorova N."/>
            <person name="Ward N."/>
            <person name="Robb F.T."/>
            <person name="Eisen J.A."/>
        </authorList>
    </citation>
    <scope>NUCLEOTIDE SEQUENCE [LARGE SCALE GENOMIC DNA]</scope>
    <source>
        <strain>ATCC 35947 / DSM 3960 / H-6-12</strain>
    </source>
</reference>
<gene>
    <name evidence="1" type="primary">coaD</name>
    <name type="ordered locus">DICTH_1014</name>
</gene>